<keyword id="KW-0274">FAD</keyword>
<keyword id="KW-0285">Flavoprotein</keyword>
<keyword id="KW-0521">NADP</keyword>
<keyword id="KW-0560">Oxidoreductase</keyword>
<keyword id="KW-1185">Reference proteome</keyword>
<proteinExistence type="inferred from homology"/>
<sequence>MPEDNLYDISIIGGGPIGMFAATYAGMRSAKVQLLESLGQLGGQPQALFSEKTIYDIPGFSSISGKDLIRNLNTQLQQFNVDVYVNSPVLNIQKTEKNQFKIITNNRISYSKSIIISTGIGSFEPRRLRIANAEALENDKLFYTVNDPSIFENKTIAIAGGGDSAIDWALELNTIAKDTIVIHRRNQFRAMESNVDKLKESGSKIMTPYTIDNLSTDNSHNNLTIQLKKVRTKDTVELSVDALLVNYGFMSNNSILKSWDLDLITTKNNLIPVNSKLETNLQNVYAIGDIANYPGRIDLIAVGMGEAPMAVNNALESLYPEKIQPKHSTQLVKNIKNNENN</sequence>
<protein>
    <recommendedName>
        <fullName evidence="1">Ferredoxin--NADP reductase</fullName>
        <shortName evidence="1">FNR</shortName>
        <shortName evidence="1">Fd-NADP(+) reductase</shortName>
        <ecNumber evidence="1">1.18.1.2</ecNumber>
    </recommendedName>
</protein>
<feature type="chain" id="PRO_0000364862" description="Ferredoxin--NADP reductase">
    <location>
        <begin position="1"/>
        <end position="341"/>
    </location>
</feature>
<feature type="binding site" evidence="1">
    <location>
        <position position="36"/>
    </location>
    <ligand>
        <name>FAD</name>
        <dbReference type="ChEBI" id="CHEBI:57692"/>
    </ligand>
</feature>
<feature type="binding site" evidence="1">
    <location>
        <position position="44"/>
    </location>
    <ligand>
        <name>FAD</name>
        <dbReference type="ChEBI" id="CHEBI:57692"/>
    </ligand>
</feature>
<feature type="binding site" evidence="1">
    <location>
        <position position="49"/>
    </location>
    <ligand>
        <name>FAD</name>
        <dbReference type="ChEBI" id="CHEBI:57692"/>
    </ligand>
</feature>
<feature type="binding site" evidence="1">
    <location>
        <position position="89"/>
    </location>
    <ligand>
        <name>FAD</name>
        <dbReference type="ChEBI" id="CHEBI:57692"/>
    </ligand>
</feature>
<feature type="binding site" evidence="1">
    <location>
        <position position="123"/>
    </location>
    <ligand>
        <name>FAD</name>
        <dbReference type="ChEBI" id="CHEBI:57692"/>
    </ligand>
</feature>
<feature type="binding site" evidence="1">
    <location>
        <position position="289"/>
    </location>
    <ligand>
        <name>FAD</name>
        <dbReference type="ChEBI" id="CHEBI:57692"/>
    </ligand>
</feature>
<feature type="binding site" evidence="1">
    <location>
        <position position="329"/>
    </location>
    <ligand>
        <name>FAD</name>
        <dbReference type="ChEBI" id="CHEBI:57692"/>
    </ligand>
</feature>
<name>FENR_LIGS1</name>
<evidence type="ECO:0000255" key="1">
    <source>
        <dbReference type="HAMAP-Rule" id="MF_01685"/>
    </source>
</evidence>
<accession>Q1WUT6</accession>
<dbReference type="EC" id="1.18.1.2" evidence="1"/>
<dbReference type="EMBL" id="CP000233">
    <property type="protein sequence ID" value="ABD99249.1"/>
    <property type="molecule type" value="Genomic_DNA"/>
</dbReference>
<dbReference type="RefSeq" id="WP_003703918.1">
    <property type="nucleotide sequence ID" value="NC_007929.1"/>
</dbReference>
<dbReference type="RefSeq" id="YP_535332.1">
    <property type="nucleotide sequence ID" value="NC_007929.1"/>
</dbReference>
<dbReference type="SMR" id="Q1WUT6"/>
<dbReference type="STRING" id="362948.LSL_0439"/>
<dbReference type="KEGG" id="lsl:LSL_0439"/>
<dbReference type="PATRIC" id="fig|362948.14.peg.515"/>
<dbReference type="HOGENOM" id="CLU_031864_5_5_9"/>
<dbReference type="OrthoDB" id="9806179at2"/>
<dbReference type="Proteomes" id="UP000006559">
    <property type="component" value="Chromosome"/>
</dbReference>
<dbReference type="GO" id="GO:0004324">
    <property type="term" value="F:ferredoxin-NADP+ reductase activity"/>
    <property type="evidence" value="ECO:0007669"/>
    <property type="project" value="UniProtKB-UniRule"/>
</dbReference>
<dbReference type="GO" id="GO:0050660">
    <property type="term" value="F:flavin adenine dinucleotide binding"/>
    <property type="evidence" value="ECO:0007669"/>
    <property type="project" value="UniProtKB-UniRule"/>
</dbReference>
<dbReference type="GO" id="GO:0050661">
    <property type="term" value="F:NADP binding"/>
    <property type="evidence" value="ECO:0007669"/>
    <property type="project" value="UniProtKB-UniRule"/>
</dbReference>
<dbReference type="Gene3D" id="3.50.50.60">
    <property type="entry name" value="FAD/NAD(P)-binding domain"/>
    <property type="match status" value="2"/>
</dbReference>
<dbReference type="HAMAP" id="MF_01685">
    <property type="entry name" value="FENR2"/>
    <property type="match status" value="1"/>
</dbReference>
<dbReference type="InterPro" id="IPR036188">
    <property type="entry name" value="FAD/NAD-bd_sf"/>
</dbReference>
<dbReference type="InterPro" id="IPR023753">
    <property type="entry name" value="FAD/NAD-binding_dom"/>
</dbReference>
<dbReference type="InterPro" id="IPR022890">
    <property type="entry name" value="Fd--NADP_Rdtase_type_2"/>
</dbReference>
<dbReference type="InterPro" id="IPR050097">
    <property type="entry name" value="Ferredoxin-NADP_redctase_2"/>
</dbReference>
<dbReference type="PANTHER" id="PTHR48105">
    <property type="entry name" value="THIOREDOXIN REDUCTASE 1-RELATED-RELATED"/>
    <property type="match status" value="1"/>
</dbReference>
<dbReference type="Pfam" id="PF07992">
    <property type="entry name" value="Pyr_redox_2"/>
    <property type="match status" value="1"/>
</dbReference>
<dbReference type="PRINTS" id="PR00368">
    <property type="entry name" value="FADPNR"/>
</dbReference>
<dbReference type="PRINTS" id="PR00469">
    <property type="entry name" value="PNDRDTASEII"/>
</dbReference>
<dbReference type="SUPFAM" id="SSF51905">
    <property type="entry name" value="FAD/NAD(P)-binding domain"/>
    <property type="match status" value="1"/>
</dbReference>
<organism>
    <name type="scientific">Ligilactobacillus salivarius (strain UCC118)</name>
    <name type="common">Lactobacillus salivarius</name>
    <dbReference type="NCBI Taxonomy" id="362948"/>
    <lineage>
        <taxon>Bacteria</taxon>
        <taxon>Bacillati</taxon>
        <taxon>Bacillota</taxon>
        <taxon>Bacilli</taxon>
        <taxon>Lactobacillales</taxon>
        <taxon>Lactobacillaceae</taxon>
        <taxon>Ligilactobacillus</taxon>
    </lineage>
</organism>
<reference key="1">
    <citation type="journal article" date="2006" name="Proc. Natl. Acad. Sci. U.S.A.">
        <title>Multireplicon genome architecture of Lactobacillus salivarius.</title>
        <authorList>
            <person name="Claesson M.J."/>
            <person name="Li Y."/>
            <person name="Leahy S."/>
            <person name="Canchaya C."/>
            <person name="van Pijkeren J.P."/>
            <person name="Cerdeno-Tarraga A.M."/>
            <person name="Parkhill J."/>
            <person name="Flynn S."/>
            <person name="O'Sullivan G.C."/>
            <person name="Collins J.K."/>
            <person name="Higgins D."/>
            <person name="Shanahan F."/>
            <person name="Fitzgerald G.F."/>
            <person name="van Sinderen D."/>
            <person name="O'Toole P.W."/>
        </authorList>
    </citation>
    <scope>NUCLEOTIDE SEQUENCE [LARGE SCALE GENOMIC DNA]</scope>
    <source>
        <strain>UCC118</strain>
    </source>
</reference>
<comment type="catalytic activity">
    <reaction evidence="1">
        <text>2 reduced [2Fe-2S]-[ferredoxin] + NADP(+) + H(+) = 2 oxidized [2Fe-2S]-[ferredoxin] + NADPH</text>
        <dbReference type="Rhea" id="RHEA:20125"/>
        <dbReference type="Rhea" id="RHEA-COMP:10000"/>
        <dbReference type="Rhea" id="RHEA-COMP:10001"/>
        <dbReference type="ChEBI" id="CHEBI:15378"/>
        <dbReference type="ChEBI" id="CHEBI:33737"/>
        <dbReference type="ChEBI" id="CHEBI:33738"/>
        <dbReference type="ChEBI" id="CHEBI:57783"/>
        <dbReference type="ChEBI" id="CHEBI:58349"/>
        <dbReference type="EC" id="1.18.1.2"/>
    </reaction>
</comment>
<comment type="cofactor">
    <cofactor evidence="1">
        <name>FAD</name>
        <dbReference type="ChEBI" id="CHEBI:57692"/>
    </cofactor>
    <text evidence="1">Binds 1 FAD per subunit.</text>
</comment>
<comment type="subunit">
    <text evidence="1">Homodimer.</text>
</comment>
<comment type="similarity">
    <text evidence="1">Belongs to the ferredoxin--NADP reductase type 2 family.</text>
</comment>
<gene>
    <name type="ordered locus">LSL_0439</name>
</gene>